<reference key="1">
    <citation type="journal article" date="2000" name="Mutat. Res.">
        <title>Identification of MucAB-like homologs on two IncT plasmids, R394 and Rts-1.</title>
        <authorList>
            <person name="Koch W.H."/>
            <person name="Fernandez de Henestrosa A.R."/>
            <person name="Woodgate R."/>
        </authorList>
    </citation>
    <scope>NUCLEOTIDE SEQUENCE [GENOMIC DNA]</scope>
</reference>
<gene>
    <name type="primary">impC</name>
</gene>
<keyword id="KW-0227">DNA damage</keyword>
<keyword id="KW-0234">DNA repair</keyword>
<keyword id="KW-0614">Plasmid</keyword>
<accession>Q9FA32</accession>
<evidence type="ECO:0000305" key="1"/>
<dbReference type="EMBL" id="AF039836">
    <property type="protein sequence ID" value="AAG33669.1"/>
    <property type="molecule type" value="Genomic_DNA"/>
</dbReference>
<dbReference type="SMR" id="Q9FA32"/>
<dbReference type="GO" id="GO:0006281">
    <property type="term" value="P:DNA repair"/>
    <property type="evidence" value="ECO:0007669"/>
    <property type="project" value="UniProtKB-KW"/>
</dbReference>
<dbReference type="GO" id="GO:0009432">
    <property type="term" value="P:SOS response"/>
    <property type="evidence" value="ECO:0007669"/>
    <property type="project" value="TreeGrafter"/>
</dbReference>
<dbReference type="Gene3D" id="3.30.910.10">
    <property type="entry name" value="DinI-like"/>
    <property type="match status" value="1"/>
</dbReference>
<dbReference type="InterPro" id="IPR036687">
    <property type="entry name" value="DinI-like_sf"/>
</dbReference>
<dbReference type="InterPro" id="IPR010391">
    <property type="entry name" value="DNA_damage-inducible_DinI-like"/>
</dbReference>
<dbReference type="PANTHER" id="PTHR36572:SF2">
    <property type="entry name" value="DNA DAMAGE-INDUCIBLE PROTEIN I"/>
    <property type="match status" value="1"/>
</dbReference>
<dbReference type="PANTHER" id="PTHR36572">
    <property type="entry name" value="DNA DAMAGE-INDUCIBLE PROTEIN I-RELATED"/>
    <property type="match status" value="1"/>
</dbReference>
<dbReference type="Pfam" id="PF06183">
    <property type="entry name" value="DinI"/>
    <property type="match status" value="1"/>
</dbReference>
<dbReference type="SUPFAM" id="SSF54857">
    <property type="entry name" value="DNA damage-inducible protein DinI"/>
    <property type="match status" value="1"/>
</dbReference>
<sequence>MLRINVCFDASKKVPAKIQQALRAEIEKEILSNYERGVVSVGKGSSAEVSISGVDDDEKKVIMQKLEDIWQSDSWLP</sequence>
<protein>
    <recommendedName>
        <fullName>Protein ImpC</fullName>
    </recommendedName>
</protein>
<organism>
    <name type="scientific">Salmonella typhimurium</name>
    <dbReference type="NCBI Taxonomy" id="90371"/>
    <lineage>
        <taxon>Bacteria</taxon>
        <taxon>Pseudomonadati</taxon>
        <taxon>Pseudomonadota</taxon>
        <taxon>Gammaproteobacteria</taxon>
        <taxon>Enterobacterales</taxon>
        <taxon>Enterobacteriaceae</taxon>
        <taxon>Salmonella</taxon>
    </lineage>
</organism>
<geneLocation type="plasmid">
    <name>IncT R394</name>
</geneLocation>
<proteinExistence type="inferred from homology"/>
<comment type="similarity">
    <text evidence="1">Belongs to the DinI family.</text>
</comment>
<feature type="chain" id="PRO_0000201643" description="Protein ImpC">
    <location>
        <begin position="1"/>
        <end position="77"/>
    </location>
</feature>
<name>IMPC2_SALTM</name>